<keyword id="KW-0963">Cytoplasm</keyword>
<keyword id="KW-0227">DNA damage</keyword>
<keyword id="KW-0234">DNA repair</keyword>
<keyword id="KW-0378">Hydrolase</keyword>
<accession>B7M8J5</accession>
<name>UNG_ECO8A</name>
<organism>
    <name type="scientific">Escherichia coli O8 (strain IAI1)</name>
    <dbReference type="NCBI Taxonomy" id="585034"/>
    <lineage>
        <taxon>Bacteria</taxon>
        <taxon>Pseudomonadati</taxon>
        <taxon>Pseudomonadota</taxon>
        <taxon>Gammaproteobacteria</taxon>
        <taxon>Enterobacterales</taxon>
        <taxon>Enterobacteriaceae</taxon>
        <taxon>Escherichia</taxon>
    </lineage>
</organism>
<protein>
    <recommendedName>
        <fullName evidence="1">Uracil-DNA glycosylase</fullName>
        <shortName evidence="1">UDG</shortName>
        <ecNumber evidence="1">3.2.2.27</ecNumber>
    </recommendedName>
</protein>
<evidence type="ECO:0000255" key="1">
    <source>
        <dbReference type="HAMAP-Rule" id="MF_00148"/>
    </source>
</evidence>
<dbReference type="EC" id="3.2.2.27" evidence="1"/>
<dbReference type="EMBL" id="CU928160">
    <property type="protein sequence ID" value="CAQ99532.1"/>
    <property type="molecule type" value="Genomic_DNA"/>
</dbReference>
<dbReference type="RefSeq" id="WP_001262716.1">
    <property type="nucleotide sequence ID" value="NC_011741.1"/>
</dbReference>
<dbReference type="SMR" id="B7M8J5"/>
<dbReference type="GeneID" id="93774506"/>
<dbReference type="KEGG" id="ecr:ECIAI1_2697"/>
<dbReference type="HOGENOM" id="CLU_032162_3_1_6"/>
<dbReference type="GO" id="GO:0005737">
    <property type="term" value="C:cytoplasm"/>
    <property type="evidence" value="ECO:0007669"/>
    <property type="project" value="UniProtKB-SubCell"/>
</dbReference>
<dbReference type="GO" id="GO:0004844">
    <property type="term" value="F:uracil DNA N-glycosylase activity"/>
    <property type="evidence" value="ECO:0007669"/>
    <property type="project" value="UniProtKB-UniRule"/>
</dbReference>
<dbReference type="GO" id="GO:0097510">
    <property type="term" value="P:base-excision repair, AP site formation via deaminated base removal"/>
    <property type="evidence" value="ECO:0007669"/>
    <property type="project" value="TreeGrafter"/>
</dbReference>
<dbReference type="CDD" id="cd10027">
    <property type="entry name" value="UDG-F1-like"/>
    <property type="match status" value="1"/>
</dbReference>
<dbReference type="FunFam" id="3.40.470.10:FF:000001">
    <property type="entry name" value="Uracil-DNA glycosylase"/>
    <property type="match status" value="1"/>
</dbReference>
<dbReference type="Gene3D" id="3.40.470.10">
    <property type="entry name" value="Uracil-DNA glycosylase-like domain"/>
    <property type="match status" value="1"/>
</dbReference>
<dbReference type="HAMAP" id="MF_00148">
    <property type="entry name" value="UDG"/>
    <property type="match status" value="1"/>
</dbReference>
<dbReference type="InterPro" id="IPR002043">
    <property type="entry name" value="UDG_fam1"/>
</dbReference>
<dbReference type="InterPro" id="IPR018085">
    <property type="entry name" value="Ura-DNA_Glyclase_AS"/>
</dbReference>
<dbReference type="InterPro" id="IPR005122">
    <property type="entry name" value="Uracil-DNA_glycosylase-like"/>
</dbReference>
<dbReference type="InterPro" id="IPR036895">
    <property type="entry name" value="Uracil-DNA_glycosylase-like_sf"/>
</dbReference>
<dbReference type="NCBIfam" id="NF003588">
    <property type="entry name" value="PRK05254.1-1"/>
    <property type="match status" value="1"/>
</dbReference>
<dbReference type="NCBIfam" id="NF003589">
    <property type="entry name" value="PRK05254.1-2"/>
    <property type="match status" value="1"/>
</dbReference>
<dbReference type="NCBIfam" id="NF003591">
    <property type="entry name" value="PRK05254.1-4"/>
    <property type="match status" value="1"/>
</dbReference>
<dbReference type="NCBIfam" id="NF003592">
    <property type="entry name" value="PRK05254.1-5"/>
    <property type="match status" value="1"/>
</dbReference>
<dbReference type="NCBIfam" id="TIGR00628">
    <property type="entry name" value="ung"/>
    <property type="match status" value="1"/>
</dbReference>
<dbReference type="PANTHER" id="PTHR11264">
    <property type="entry name" value="URACIL-DNA GLYCOSYLASE"/>
    <property type="match status" value="1"/>
</dbReference>
<dbReference type="PANTHER" id="PTHR11264:SF0">
    <property type="entry name" value="URACIL-DNA GLYCOSYLASE"/>
    <property type="match status" value="1"/>
</dbReference>
<dbReference type="Pfam" id="PF03167">
    <property type="entry name" value="UDG"/>
    <property type="match status" value="1"/>
</dbReference>
<dbReference type="SMART" id="SM00986">
    <property type="entry name" value="UDG"/>
    <property type="match status" value="1"/>
</dbReference>
<dbReference type="SMART" id="SM00987">
    <property type="entry name" value="UreE_C"/>
    <property type="match status" value="1"/>
</dbReference>
<dbReference type="SUPFAM" id="SSF52141">
    <property type="entry name" value="Uracil-DNA glycosylase-like"/>
    <property type="match status" value="1"/>
</dbReference>
<dbReference type="PROSITE" id="PS00130">
    <property type="entry name" value="U_DNA_GLYCOSYLASE"/>
    <property type="match status" value="1"/>
</dbReference>
<feature type="chain" id="PRO_1000199783" description="Uracil-DNA glycosylase">
    <location>
        <begin position="1"/>
        <end position="229"/>
    </location>
</feature>
<feature type="active site" description="Proton acceptor" evidence="1">
    <location>
        <position position="64"/>
    </location>
</feature>
<comment type="function">
    <text evidence="1">Excises uracil residues from the DNA which can arise as a result of misincorporation of dUMP residues by DNA polymerase or due to deamination of cytosine.</text>
</comment>
<comment type="catalytic activity">
    <reaction evidence="1">
        <text>Hydrolyzes single-stranded DNA or mismatched double-stranded DNA and polynucleotides, releasing free uracil.</text>
        <dbReference type="EC" id="3.2.2.27"/>
    </reaction>
</comment>
<comment type="subcellular location">
    <subcellularLocation>
        <location evidence="1">Cytoplasm</location>
    </subcellularLocation>
</comment>
<comment type="similarity">
    <text evidence="1">Belongs to the uracil-DNA glycosylase (UDG) superfamily. UNG family.</text>
</comment>
<reference key="1">
    <citation type="journal article" date="2009" name="PLoS Genet.">
        <title>Organised genome dynamics in the Escherichia coli species results in highly diverse adaptive paths.</title>
        <authorList>
            <person name="Touchon M."/>
            <person name="Hoede C."/>
            <person name="Tenaillon O."/>
            <person name="Barbe V."/>
            <person name="Baeriswyl S."/>
            <person name="Bidet P."/>
            <person name="Bingen E."/>
            <person name="Bonacorsi S."/>
            <person name="Bouchier C."/>
            <person name="Bouvet O."/>
            <person name="Calteau A."/>
            <person name="Chiapello H."/>
            <person name="Clermont O."/>
            <person name="Cruveiller S."/>
            <person name="Danchin A."/>
            <person name="Diard M."/>
            <person name="Dossat C."/>
            <person name="Karoui M.E."/>
            <person name="Frapy E."/>
            <person name="Garry L."/>
            <person name="Ghigo J.M."/>
            <person name="Gilles A.M."/>
            <person name="Johnson J."/>
            <person name="Le Bouguenec C."/>
            <person name="Lescat M."/>
            <person name="Mangenot S."/>
            <person name="Martinez-Jehanne V."/>
            <person name="Matic I."/>
            <person name="Nassif X."/>
            <person name="Oztas S."/>
            <person name="Petit M.A."/>
            <person name="Pichon C."/>
            <person name="Rouy Z."/>
            <person name="Ruf C.S."/>
            <person name="Schneider D."/>
            <person name="Tourret J."/>
            <person name="Vacherie B."/>
            <person name="Vallenet D."/>
            <person name="Medigue C."/>
            <person name="Rocha E.P.C."/>
            <person name="Denamur E."/>
        </authorList>
    </citation>
    <scope>NUCLEOTIDE SEQUENCE [LARGE SCALE GENOMIC DNA]</scope>
    <source>
        <strain>IAI1</strain>
    </source>
</reference>
<gene>
    <name evidence="1" type="primary">ung</name>
    <name type="ordered locus">ECIAI1_2697</name>
</gene>
<sequence>MANELTWHDVLAEEKQQPYFLNTLQTVASERQSGVTIYPPQKDVFNAFRFTELGDVKVVILGQDPYHGPGQAHGLAFSVRPGIAIPPSLLNMYKELENTIPGFTRPNHGYLESWARQGVLLLNTVLTVRAGQAHSHASLGWETFTDKVISLINQHREGVVFLLWGSHAQKKGAIIDKQRHHVLKAPHPSPLSAHRGFFGCNHFVLANQWLEQRGETPIDWMPVLPAESE</sequence>
<proteinExistence type="inferred from homology"/>